<accession>B1LJH0</accession>
<reference key="1">
    <citation type="journal article" date="2008" name="J. Bacteriol.">
        <title>Insights into the environmental resistance gene pool from the genome sequence of the multidrug-resistant environmental isolate Escherichia coli SMS-3-5.</title>
        <authorList>
            <person name="Fricke W.F."/>
            <person name="Wright M.S."/>
            <person name="Lindell A.H."/>
            <person name="Harkins D.M."/>
            <person name="Baker-Austin C."/>
            <person name="Ravel J."/>
            <person name="Stepanauskas R."/>
        </authorList>
    </citation>
    <scope>NUCLEOTIDE SEQUENCE [LARGE SCALE GENOMIC DNA]</scope>
    <source>
        <strain>SMS-3-5 / SECEC</strain>
    </source>
</reference>
<dbReference type="EC" id="2.2.1.7" evidence="1"/>
<dbReference type="EMBL" id="CP000970">
    <property type="protein sequence ID" value="ACB16540.1"/>
    <property type="molecule type" value="Genomic_DNA"/>
</dbReference>
<dbReference type="RefSeq" id="WP_000006810.1">
    <property type="nucleotide sequence ID" value="NC_010498.1"/>
</dbReference>
<dbReference type="SMR" id="B1LJH0"/>
<dbReference type="KEGG" id="ecm:EcSMS35_0456"/>
<dbReference type="HOGENOM" id="CLU_009227_1_4_6"/>
<dbReference type="UniPathway" id="UPA00064">
    <property type="reaction ID" value="UER00091"/>
</dbReference>
<dbReference type="Proteomes" id="UP000007011">
    <property type="component" value="Chromosome"/>
</dbReference>
<dbReference type="GO" id="GO:0005829">
    <property type="term" value="C:cytosol"/>
    <property type="evidence" value="ECO:0007669"/>
    <property type="project" value="TreeGrafter"/>
</dbReference>
<dbReference type="GO" id="GO:0008661">
    <property type="term" value="F:1-deoxy-D-xylulose-5-phosphate synthase activity"/>
    <property type="evidence" value="ECO:0007669"/>
    <property type="project" value="UniProtKB-UniRule"/>
</dbReference>
<dbReference type="GO" id="GO:0000287">
    <property type="term" value="F:magnesium ion binding"/>
    <property type="evidence" value="ECO:0007669"/>
    <property type="project" value="UniProtKB-UniRule"/>
</dbReference>
<dbReference type="GO" id="GO:0030976">
    <property type="term" value="F:thiamine pyrophosphate binding"/>
    <property type="evidence" value="ECO:0007669"/>
    <property type="project" value="UniProtKB-UniRule"/>
</dbReference>
<dbReference type="GO" id="GO:0052865">
    <property type="term" value="P:1-deoxy-D-xylulose 5-phosphate biosynthetic process"/>
    <property type="evidence" value="ECO:0007669"/>
    <property type="project" value="UniProtKB-UniPathway"/>
</dbReference>
<dbReference type="GO" id="GO:0019288">
    <property type="term" value="P:isopentenyl diphosphate biosynthetic process, methylerythritol 4-phosphate pathway"/>
    <property type="evidence" value="ECO:0007669"/>
    <property type="project" value="TreeGrafter"/>
</dbReference>
<dbReference type="GO" id="GO:0016114">
    <property type="term" value="P:terpenoid biosynthetic process"/>
    <property type="evidence" value="ECO:0007669"/>
    <property type="project" value="UniProtKB-UniRule"/>
</dbReference>
<dbReference type="GO" id="GO:0009228">
    <property type="term" value="P:thiamine biosynthetic process"/>
    <property type="evidence" value="ECO:0007669"/>
    <property type="project" value="UniProtKB-UniRule"/>
</dbReference>
<dbReference type="CDD" id="cd02007">
    <property type="entry name" value="TPP_DXS"/>
    <property type="match status" value="1"/>
</dbReference>
<dbReference type="CDD" id="cd07033">
    <property type="entry name" value="TPP_PYR_DXS_TK_like"/>
    <property type="match status" value="1"/>
</dbReference>
<dbReference type="FunFam" id="3.40.50.920:FF:000002">
    <property type="entry name" value="1-deoxy-D-xylulose-5-phosphate synthase"/>
    <property type="match status" value="1"/>
</dbReference>
<dbReference type="FunFam" id="3.40.50.970:FF:000005">
    <property type="entry name" value="1-deoxy-D-xylulose-5-phosphate synthase"/>
    <property type="match status" value="1"/>
</dbReference>
<dbReference type="Gene3D" id="3.40.50.920">
    <property type="match status" value="1"/>
</dbReference>
<dbReference type="Gene3D" id="3.40.50.970">
    <property type="match status" value="2"/>
</dbReference>
<dbReference type="HAMAP" id="MF_00315">
    <property type="entry name" value="DXP_synth"/>
    <property type="match status" value="1"/>
</dbReference>
<dbReference type="InterPro" id="IPR005477">
    <property type="entry name" value="Dxylulose-5-P_synthase"/>
</dbReference>
<dbReference type="InterPro" id="IPR029061">
    <property type="entry name" value="THDP-binding"/>
</dbReference>
<dbReference type="InterPro" id="IPR009014">
    <property type="entry name" value="Transketo_C/PFOR_II"/>
</dbReference>
<dbReference type="InterPro" id="IPR005475">
    <property type="entry name" value="Transketolase-like_Pyr-bd"/>
</dbReference>
<dbReference type="InterPro" id="IPR020826">
    <property type="entry name" value="Transketolase_BS"/>
</dbReference>
<dbReference type="InterPro" id="IPR033248">
    <property type="entry name" value="Transketolase_C"/>
</dbReference>
<dbReference type="InterPro" id="IPR049557">
    <property type="entry name" value="Transketolase_CS"/>
</dbReference>
<dbReference type="NCBIfam" id="TIGR00204">
    <property type="entry name" value="dxs"/>
    <property type="match status" value="1"/>
</dbReference>
<dbReference type="NCBIfam" id="NF003933">
    <property type="entry name" value="PRK05444.2-2"/>
    <property type="match status" value="1"/>
</dbReference>
<dbReference type="PANTHER" id="PTHR43322">
    <property type="entry name" value="1-D-DEOXYXYLULOSE 5-PHOSPHATE SYNTHASE-RELATED"/>
    <property type="match status" value="1"/>
</dbReference>
<dbReference type="PANTHER" id="PTHR43322:SF5">
    <property type="entry name" value="1-DEOXY-D-XYLULOSE-5-PHOSPHATE SYNTHASE, CHLOROPLASTIC"/>
    <property type="match status" value="1"/>
</dbReference>
<dbReference type="Pfam" id="PF13292">
    <property type="entry name" value="DXP_synthase_N"/>
    <property type="match status" value="1"/>
</dbReference>
<dbReference type="Pfam" id="PF02779">
    <property type="entry name" value="Transket_pyr"/>
    <property type="match status" value="1"/>
</dbReference>
<dbReference type="Pfam" id="PF02780">
    <property type="entry name" value="Transketolase_C"/>
    <property type="match status" value="1"/>
</dbReference>
<dbReference type="SMART" id="SM00861">
    <property type="entry name" value="Transket_pyr"/>
    <property type="match status" value="1"/>
</dbReference>
<dbReference type="SUPFAM" id="SSF52518">
    <property type="entry name" value="Thiamin diphosphate-binding fold (THDP-binding)"/>
    <property type="match status" value="2"/>
</dbReference>
<dbReference type="SUPFAM" id="SSF52922">
    <property type="entry name" value="TK C-terminal domain-like"/>
    <property type="match status" value="1"/>
</dbReference>
<dbReference type="PROSITE" id="PS00801">
    <property type="entry name" value="TRANSKETOLASE_1"/>
    <property type="match status" value="1"/>
</dbReference>
<dbReference type="PROSITE" id="PS00802">
    <property type="entry name" value="TRANSKETOLASE_2"/>
    <property type="match status" value="1"/>
</dbReference>
<proteinExistence type="inferred from homology"/>
<comment type="function">
    <text evidence="1">Catalyzes the acyloin condensation reaction between C atoms 2 and 3 of pyruvate and glyceraldehyde 3-phosphate to yield 1-deoxy-D-xylulose-5-phosphate (DXP).</text>
</comment>
<comment type="catalytic activity">
    <reaction evidence="1">
        <text>D-glyceraldehyde 3-phosphate + pyruvate + H(+) = 1-deoxy-D-xylulose 5-phosphate + CO2</text>
        <dbReference type="Rhea" id="RHEA:12605"/>
        <dbReference type="ChEBI" id="CHEBI:15361"/>
        <dbReference type="ChEBI" id="CHEBI:15378"/>
        <dbReference type="ChEBI" id="CHEBI:16526"/>
        <dbReference type="ChEBI" id="CHEBI:57792"/>
        <dbReference type="ChEBI" id="CHEBI:59776"/>
        <dbReference type="EC" id="2.2.1.7"/>
    </reaction>
</comment>
<comment type="cofactor">
    <cofactor evidence="1">
        <name>Mg(2+)</name>
        <dbReference type="ChEBI" id="CHEBI:18420"/>
    </cofactor>
    <text evidence="1">Binds 1 Mg(2+) ion per subunit.</text>
</comment>
<comment type="cofactor">
    <cofactor evidence="1">
        <name>thiamine diphosphate</name>
        <dbReference type="ChEBI" id="CHEBI:58937"/>
    </cofactor>
    <text evidence="1">Binds 1 thiamine pyrophosphate per subunit.</text>
</comment>
<comment type="pathway">
    <text evidence="1">Metabolic intermediate biosynthesis; 1-deoxy-D-xylulose 5-phosphate biosynthesis; 1-deoxy-D-xylulose 5-phosphate from D-glyceraldehyde 3-phosphate and pyruvate: step 1/1.</text>
</comment>
<comment type="subunit">
    <text evidence="1">Homodimer.</text>
</comment>
<comment type="similarity">
    <text evidence="1">Belongs to the transketolase family. DXPS subfamily.</text>
</comment>
<organism>
    <name type="scientific">Escherichia coli (strain SMS-3-5 / SECEC)</name>
    <dbReference type="NCBI Taxonomy" id="439855"/>
    <lineage>
        <taxon>Bacteria</taxon>
        <taxon>Pseudomonadati</taxon>
        <taxon>Pseudomonadota</taxon>
        <taxon>Gammaproteobacteria</taxon>
        <taxon>Enterobacterales</taxon>
        <taxon>Enterobacteriaceae</taxon>
        <taxon>Escherichia</taxon>
    </lineage>
</organism>
<evidence type="ECO:0000255" key="1">
    <source>
        <dbReference type="HAMAP-Rule" id="MF_00315"/>
    </source>
</evidence>
<keyword id="KW-0414">Isoprene biosynthesis</keyword>
<keyword id="KW-0460">Magnesium</keyword>
<keyword id="KW-0479">Metal-binding</keyword>
<keyword id="KW-0784">Thiamine biosynthesis</keyword>
<keyword id="KW-0786">Thiamine pyrophosphate</keyword>
<keyword id="KW-0808">Transferase</keyword>
<protein>
    <recommendedName>
        <fullName evidence="1">1-deoxy-D-xylulose-5-phosphate synthase</fullName>
        <ecNumber evidence="1">2.2.1.7</ecNumber>
    </recommendedName>
    <alternativeName>
        <fullName evidence="1">1-deoxyxylulose-5-phosphate synthase</fullName>
        <shortName evidence="1">DXP synthase</shortName>
        <shortName evidence="1">DXPS</shortName>
    </alternativeName>
</protein>
<gene>
    <name evidence="1" type="primary">dxs</name>
    <name type="ordered locus">EcSMS35_0456</name>
</gene>
<sequence length="620" mass="67585">MSFDIAKYPTLALVDSTQELRLLPKESLPKLCDELRRYLLDSVSRSSGHFASGLGTVELTVALHYVYNTPFDQLIWDVGHQAYPHKILTGRRDKIGTIRQKGGLHPFPWRGESEYDVLSVGHSSTSISAGIGIAVAAEKEGKNRRTVCVIGDGAITAGMAFEAMNHAGDIRPDMLVVLNDNEMSISENVGALNNHLAQLLSGKLYSSLREGGKKVFSGVPPIKELLKRTEEHIKGMVVPGTLFEELGFNYIGPVDGHDVLGLITTLKNMRDLKGPQFLHIMTKKGRGYEPAEKDPITFHAVPKFDPSSGCLPKSSGGLPSYSKIFGDWLCETAAKDNKLMAITPAMREGSGMVEFSRKFPDRYFDVAIAEQHAVTFAAGLAIGGYKPIVAIYSTFLQRAYDQVLHDVAIQKLPVLFAIDRAGIVGADGQTHQGAFDLSYLRCIPEMVIMTPSDENECRQMLYTGYHYNDGPSAVRYPRGNAVGVELTPLEKLPIGKGIVKRRGEKLAILNFGTLMPEAAKVAESLNATLVDMRFVKPLDEALILEIAASHEALVTVEENAIMGGAGSGVNEVLMAHRKPVPVLNIGLPDFFIPQGTQEEMRAELGLDAAGMEAKIKAWLA</sequence>
<feature type="chain" id="PRO_1000119549" description="1-deoxy-D-xylulose-5-phosphate synthase">
    <location>
        <begin position="1"/>
        <end position="620"/>
    </location>
</feature>
<feature type="binding site" evidence="1">
    <location>
        <position position="80"/>
    </location>
    <ligand>
        <name>thiamine diphosphate</name>
        <dbReference type="ChEBI" id="CHEBI:58937"/>
    </ligand>
</feature>
<feature type="binding site" evidence="1">
    <location>
        <begin position="121"/>
        <end position="123"/>
    </location>
    <ligand>
        <name>thiamine diphosphate</name>
        <dbReference type="ChEBI" id="CHEBI:58937"/>
    </ligand>
</feature>
<feature type="binding site" evidence="1">
    <location>
        <position position="152"/>
    </location>
    <ligand>
        <name>Mg(2+)</name>
        <dbReference type="ChEBI" id="CHEBI:18420"/>
    </ligand>
</feature>
<feature type="binding site" evidence="1">
    <location>
        <begin position="153"/>
        <end position="154"/>
    </location>
    <ligand>
        <name>thiamine diphosphate</name>
        <dbReference type="ChEBI" id="CHEBI:58937"/>
    </ligand>
</feature>
<feature type="binding site" evidence="1">
    <location>
        <position position="181"/>
    </location>
    <ligand>
        <name>Mg(2+)</name>
        <dbReference type="ChEBI" id="CHEBI:18420"/>
    </ligand>
</feature>
<feature type="binding site" evidence="1">
    <location>
        <position position="181"/>
    </location>
    <ligand>
        <name>thiamine diphosphate</name>
        <dbReference type="ChEBI" id="CHEBI:58937"/>
    </ligand>
</feature>
<feature type="binding site" evidence="1">
    <location>
        <position position="288"/>
    </location>
    <ligand>
        <name>thiamine diphosphate</name>
        <dbReference type="ChEBI" id="CHEBI:58937"/>
    </ligand>
</feature>
<feature type="binding site" evidence="1">
    <location>
        <position position="370"/>
    </location>
    <ligand>
        <name>thiamine diphosphate</name>
        <dbReference type="ChEBI" id="CHEBI:58937"/>
    </ligand>
</feature>
<name>DXS_ECOSM</name>